<evidence type="ECO:0000255" key="1">
    <source>
        <dbReference type="HAMAP-Rule" id="MF_00435"/>
    </source>
</evidence>
<evidence type="ECO:0000255" key="2">
    <source>
        <dbReference type="PROSITE-ProRule" id="PRU01197"/>
    </source>
</evidence>
<evidence type="ECO:0000255" key="3">
    <source>
        <dbReference type="PROSITE-ProRule" id="PRU01198"/>
    </source>
</evidence>
<organism>
    <name type="scientific">Cereibacter sphaeroides (strain ATCC 17023 / DSM 158 / JCM 6121 / CCUG 31486 / LMG 2827 / NBRC 12203 / NCIMB 8253 / ATH 2.4.1.)</name>
    <name type="common">Rhodobacter sphaeroides</name>
    <dbReference type="NCBI Taxonomy" id="272943"/>
    <lineage>
        <taxon>Bacteria</taxon>
        <taxon>Pseudomonadati</taxon>
        <taxon>Pseudomonadota</taxon>
        <taxon>Alphaproteobacteria</taxon>
        <taxon>Rhodobacterales</taxon>
        <taxon>Paracoccaceae</taxon>
        <taxon>Cereibacter</taxon>
    </lineage>
</organism>
<accession>Q3J5C0</accession>
<dbReference type="EC" id="1.1.1.86" evidence="1"/>
<dbReference type="EMBL" id="CP000143">
    <property type="protein sequence ID" value="ABA78014.1"/>
    <property type="molecule type" value="Genomic_DNA"/>
</dbReference>
<dbReference type="RefSeq" id="WP_009563794.1">
    <property type="nucleotide sequence ID" value="NC_007493.2"/>
</dbReference>
<dbReference type="RefSeq" id="YP_351915.1">
    <property type="nucleotide sequence ID" value="NC_007493.2"/>
</dbReference>
<dbReference type="SMR" id="Q3J5C0"/>
<dbReference type="STRING" id="272943.RSP_1865"/>
<dbReference type="EnsemblBacteria" id="ABA78014">
    <property type="protein sequence ID" value="ABA78014"/>
    <property type="gene ID" value="RSP_1865"/>
</dbReference>
<dbReference type="GeneID" id="3719132"/>
<dbReference type="KEGG" id="rsp:RSP_1865"/>
<dbReference type="PATRIC" id="fig|272943.9.peg.754"/>
<dbReference type="eggNOG" id="COG0059">
    <property type="taxonomic scope" value="Bacteria"/>
</dbReference>
<dbReference type="OrthoDB" id="9804088at2"/>
<dbReference type="PhylomeDB" id="Q3J5C0"/>
<dbReference type="UniPathway" id="UPA00047">
    <property type="reaction ID" value="UER00056"/>
</dbReference>
<dbReference type="UniPathway" id="UPA00049">
    <property type="reaction ID" value="UER00060"/>
</dbReference>
<dbReference type="Proteomes" id="UP000002703">
    <property type="component" value="Chromosome 1"/>
</dbReference>
<dbReference type="GO" id="GO:0005829">
    <property type="term" value="C:cytosol"/>
    <property type="evidence" value="ECO:0007669"/>
    <property type="project" value="TreeGrafter"/>
</dbReference>
<dbReference type="GO" id="GO:0004455">
    <property type="term" value="F:ketol-acid reductoisomerase activity"/>
    <property type="evidence" value="ECO:0007669"/>
    <property type="project" value="UniProtKB-UniRule"/>
</dbReference>
<dbReference type="GO" id="GO:0000287">
    <property type="term" value="F:magnesium ion binding"/>
    <property type="evidence" value="ECO:0007669"/>
    <property type="project" value="UniProtKB-UniRule"/>
</dbReference>
<dbReference type="GO" id="GO:0050661">
    <property type="term" value="F:NADP binding"/>
    <property type="evidence" value="ECO:0007669"/>
    <property type="project" value="InterPro"/>
</dbReference>
<dbReference type="GO" id="GO:0009097">
    <property type="term" value="P:isoleucine biosynthetic process"/>
    <property type="evidence" value="ECO:0007669"/>
    <property type="project" value="UniProtKB-UniRule"/>
</dbReference>
<dbReference type="GO" id="GO:0009099">
    <property type="term" value="P:L-valine biosynthetic process"/>
    <property type="evidence" value="ECO:0007669"/>
    <property type="project" value="UniProtKB-UniRule"/>
</dbReference>
<dbReference type="FunFam" id="3.40.50.720:FF:000023">
    <property type="entry name" value="Ketol-acid reductoisomerase (NADP(+))"/>
    <property type="match status" value="1"/>
</dbReference>
<dbReference type="Gene3D" id="6.10.240.10">
    <property type="match status" value="1"/>
</dbReference>
<dbReference type="Gene3D" id="3.40.50.720">
    <property type="entry name" value="NAD(P)-binding Rossmann-like Domain"/>
    <property type="match status" value="1"/>
</dbReference>
<dbReference type="HAMAP" id="MF_00435">
    <property type="entry name" value="IlvC"/>
    <property type="match status" value="1"/>
</dbReference>
<dbReference type="InterPro" id="IPR008927">
    <property type="entry name" value="6-PGluconate_DH-like_C_sf"/>
</dbReference>
<dbReference type="InterPro" id="IPR013023">
    <property type="entry name" value="KARI"/>
</dbReference>
<dbReference type="InterPro" id="IPR000506">
    <property type="entry name" value="KARI_C"/>
</dbReference>
<dbReference type="InterPro" id="IPR013116">
    <property type="entry name" value="KARI_N"/>
</dbReference>
<dbReference type="InterPro" id="IPR014359">
    <property type="entry name" value="KARI_prok"/>
</dbReference>
<dbReference type="InterPro" id="IPR036291">
    <property type="entry name" value="NAD(P)-bd_dom_sf"/>
</dbReference>
<dbReference type="NCBIfam" id="TIGR00465">
    <property type="entry name" value="ilvC"/>
    <property type="match status" value="1"/>
</dbReference>
<dbReference type="NCBIfam" id="NF004017">
    <property type="entry name" value="PRK05479.1"/>
    <property type="match status" value="1"/>
</dbReference>
<dbReference type="NCBIfam" id="NF009940">
    <property type="entry name" value="PRK13403.1"/>
    <property type="match status" value="1"/>
</dbReference>
<dbReference type="PANTHER" id="PTHR21371">
    <property type="entry name" value="KETOL-ACID REDUCTOISOMERASE, MITOCHONDRIAL"/>
    <property type="match status" value="1"/>
</dbReference>
<dbReference type="PANTHER" id="PTHR21371:SF1">
    <property type="entry name" value="KETOL-ACID REDUCTOISOMERASE, MITOCHONDRIAL"/>
    <property type="match status" value="1"/>
</dbReference>
<dbReference type="Pfam" id="PF01450">
    <property type="entry name" value="KARI_C"/>
    <property type="match status" value="1"/>
</dbReference>
<dbReference type="Pfam" id="PF07991">
    <property type="entry name" value="KARI_N"/>
    <property type="match status" value="1"/>
</dbReference>
<dbReference type="PIRSF" id="PIRSF000116">
    <property type="entry name" value="IlvC_gammaproteo"/>
    <property type="match status" value="1"/>
</dbReference>
<dbReference type="SUPFAM" id="SSF48179">
    <property type="entry name" value="6-phosphogluconate dehydrogenase C-terminal domain-like"/>
    <property type="match status" value="1"/>
</dbReference>
<dbReference type="SUPFAM" id="SSF51735">
    <property type="entry name" value="NAD(P)-binding Rossmann-fold domains"/>
    <property type="match status" value="1"/>
</dbReference>
<dbReference type="PROSITE" id="PS51851">
    <property type="entry name" value="KARI_C"/>
    <property type="match status" value="1"/>
</dbReference>
<dbReference type="PROSITE" id="PS51850">
    <property type="entry name" value="KARI_N"/>
    <property type="match status" value="1"/>
</dbReference>
<keyword id="KW-0028">Amino-acid biosynthesis</keyword>
<keyword id="KW-0100">Branched-chain amino acid biosynthesis</keyword>
<keyword id="KW-0460">Magnesium</keyword>
<keyword id="KW-0479">Metal-binding</keyword>
<keyword id="KW-0521">NADP</keyword>
<keyword id="KW-0560">Oxidoreductase</keyword>
<keyword id="KW-1185">Reference proteome</keyword>
<name>ILVC_CERS4</name>
<proteinExistence type="inferred from homology"/>
<feature type="chain" id="PRO_0000226196" description="Ketol-acid reductoisomerase (NADP(+))">
    <location>
        <begin position="1"/>
        <end position="340"/>
    </location>
</feature>
<feature type="domain" description="KARI N-terminal Rossmann" evidence="2">
    <location>
        <begin position="1"/>
        <end position="182"/>
    </location>
</feature>
<feature type="domain" description="KARI C-terminal knotted" evidence="3">
    <location>
        <begin position="183"/>
        <end position="329"/>
    </location>
</feature>
<feature type="active site" evidence="1">
    <location>
        <position position="108"/>
    </location>
</feature>
<feature type="binding site" evidence="1">
    <location>
        <begin position="24"/>
        <end position="27"/>
    </location>
    <ligand>
        <name>NADP(+)</name>
        <dbReference type="ChEBI" id="CHEBI:58349"/>
    </ligand>
</feature>
<feature type="binding site" evidence="1">
    <location>
        <position position="48"/>
    </location>
    <ligand>
        <name>NADP(+)</name>
        <dbReference type="ChEBI" id="CHEBI:58349"/>
    </ligand>
</feature>
<feature type="binding site" evidence="1">
    <location>
        <position position="51"/>
    </location>
    <ligand>
        <name>NADP(+)</name>
        <dbReference type="ChEBI" id="CHEBI:58349"/>
    </ligand>
</feature>
<feature type="binding site" evidence="1">
    <location>
        <position position="53"/>
    </location>
    <ligand>
        <name>NADP(+)</name>
        <dbReference type="ChEBI" id="CHEBI:58349"/>
    </ligand>
</feature>
<feature type="binding site" evidence="1">
    <location>
        <begin position="83"/>
        <end position="86"/>
    </location>
    <ligand>
        <name>NADP(+)</name>
        <dbReference type="ChEBI" id="CHEBI:58349"/>
    </ligand>
</feature>
<feature type="binding site" evidence="1">
    <location>
        <position position="134"/>
    </location>
    <ligand>
        <name>NADP(+)</name>
        <dbReference type="ChEBI" id="CHEBI:58349"/>
    </ligand>
</feature>
<feature type="binding site" evidence="1">
    <location>
        <position position="191"/>
    </location>
    <ligand>
        <name>Mg(2+)</name>
        <dbReference type="ChEBI" id="CHEBI:18420"/>
        <label>1</label>
    </ligand>
</feature>
<feature type="binding site" evidence="1">
    <location>
        <position position="191"/>
    </location>
    <ligand>
        <name>Mg(2+)</name>
        <dbReference type="ChEBI" id="CHEBI:18420"/>
        <label>2</label>
    </ligand>
</feature>
<feature type="binding site" evidence="1">
    <location>
        <position position="195"/>
    </location>
    <ligand>
        <name>Mg(2+)</name>
        <dbReference type="ChEBI" id="CHEBI:18420"/>
        <label>1</label>
    </ligand>
</feature>
<feature type="binding site" evidence="1">
    <location>
        <position position="227"/>
    </location>
    <ligand>
        <name>Mg(2+)</name>
        <dbReference type="ChEBI" id="CHEBI:18420"/>
        <label>2</label>
    </ligand>
</feature>
<feature type="binding site" evidence="1">
    <location>
        <position position="231"/>
    </location>
    <ligand>
        <name>Mg(2+)</name>
        <dbReference type="ChEBI" id="CHEBI:18420"/>
        <label>2</label>
    </ligand>
</feature>
<feature type="binding site" evidence="1">
    <location>
        <position position="252"/>
    </location>
    <ligand>
        <name>substrate</name>
    </ligand>
</feature>
<sequence>MRVYYDRDCDINLIKDKKVAILGYGSQGHAHALNLRDSGAKNVVVALREGSPSAKKAEAEGLKVMGIAEAAAWCDLIMFTMPDELQAETYRKYVHDNLREGSAIAFAHGLNVHFGLIEPKPGVDVIMMAPKGPGHTVRGEYVKGGGVPCLVAVHNDATGKAMEIGLSYCSAIGGGRSGIIETNFRQECETDLFGEQAVLCGGLVELIRMGFETLVEAGYEPEMAYFECLHEVKLIVDLIYEGGIANMNYSISNTAEYGEYVSGPRILPYEETKARMKAVLTDIQTGKFVRDFMQENAVGQPFFKATRRINDEHQIEQVGEKLRGMMPWISKGKMVDRARN</sequence>
<protein>
    <recommendedName>
        <fullName evidence="1">Ketol-acid reductoisomerase (NADP(+))</fullName>
        <shortName evidence="1">KARI</shortName>
        <ecNumber evidence="1">1.1.1.86</ecNumber>
    </recommendedName>
    <alternativeName>
        <fullName evidence="1">Acetohydroxy-acid isomeroreductase</fullName>
        <shortName evidence="1">AHIR</shortName>
    </alternativeName>
    <alternativeName>
        <fullName evidence="1">Alpha-keto-beta-hydroxylacyl reductoisomerase</fullName>
    </alternativeName>
    <alternativeName>
        <fullName evidence="1">Ketol-acid reductoisomerase type 1</fullName>
    </alternativeName>
    <alternativeName>
        <fullName evidence="1">Ketol-acid reductoisomerase type I</fullName>
    </alternativeName>
</protein>
<gene>
    <name evidence="1" type="primary">ilvC</name>
    <name type="ordered locus">RHOS4_04460</name>
    <name type="ordered locus">RSP_1865</name>
</gene>
<comment type="function">
    <text evidence="1">Involved in the biosynthesis of branched-chain amino acids (BCAA). Catalyzes an alkyl-migration followed by a ketol-acid reduction of (S)-2-acetolactate (S2AL) to yield (R)-2,3-dihydroxy-isovalerate. In the isomerase reaction, S2AL is rearranged via a Mg-dependent methyl migration to produce 3-hydroxy-3-methyl-2-ketobutyrate (HMKB). In the reductase reaction, this 2-ketoacid undergoes a metal-dependent reduction by NADPH to yield (R)-2,3-dihydroxy-isovalerate.</text>
</comment>
<comment type="catalytic activity">
    <reaction evidence="1">
        <text>(2R)-2,3-dihydroxy-3-methylbutanoate + NADP(+) = (2S)-2-acetolactate + NADPH + H(+)</text>
        <dbReference type="Rhea" id="RHEA:22068"/>
        <dbReference type="ChEBI" id="CHEBI:15378"/>
        <dbReference type="ChEBI" id="CHEBI:49072"/>
        <dbReference type="ChEBI" id="CHEBI:57783"/>
        <dbReference type="ChEBI" id="CHEBI:58349"/>
        <dbReference type="ChEBI" id="CHEBI:58476"/>
        <dbReference type="EC" id="1.1.1.86"/>
    </reaction>
</comment>
<comment type="catalytic activity">
    <reaction evidence="1">
        <text>(2R,3R)-2,3-dihydroxy-3-methylpentanoate + NADP(+) = (S)-2-ethyl-2-hydroxy-3-oxobutanoate + NADPH + H(+)</text>
        <dbReference type="Rhea" id="RHEA:13493"/>
        <dbReference type="ChEBI" id="CHEBI:15378"/>
        <dbReference type="ChEBI" id="CHEBI:49256"/>
        <dbReference type="ChEBI" id="CHEBI:49258"/>
        <dbReference type="ChEBI" id="CHEBI:57783"/>
        <dbReference type="ChEBI" id="CHEBI:58349"/>
        <dbReference type="EC" id="1.1.1.86"/>
    </reaction>
</comment>
<comment type="cofactor">
    <cofactor evidence="1">
        <name>Mg(2+)</name>
        <dbReference type="ChEBI" id="CHEBI:18420"/>
    </cofactor>
    <text evidence="1">Binds 2 magnesium ions per subunit.</text>
</comment>
<comment type="pathway">
    <text evidence="1">Amino-acid biosynthesis; L-isoleucine biosynthesis; L-isoleucine from 2-oxobutanoate: step 2/4.</text>
</comment>
<comment type="pathway">
    <text evidence="1">Amino-acid biosynthesis; L-valine biosynthesis; L-valine from pyruvate: step 2/4.</text>
</comment>
<comment type="similarity">
    <text evidence="1">Belongs to the ketol-acid reductoisomerase family.</text>
</comment>
<reference key="1">
    <citation type="submission" date="2005-09" db="EMBL/GenBank/DDBJ databases">
        <title>Complete sequence of chromosome 1 of Rhodobacter sphaeroides 2.4.1.</title>
        <authorList>
            <person name="Copeland A."/>
            <person name="Lucas S."/>
            <person name="Lapidus A."/>
            <person name="Barry K."/>
            <person name="Detter J.C."/>
            <person name="Glavina T."/>
            <person name="Hammon N."/>
            <person name="Israni S."/>
            <person name="Pitluck S."/>
            <person name="Richardson P."/>
            <person name="Mackenzie C."/>
            <person name="Choudhary M."/>
            <person name="Larimer F."/>
            <person name="Hauser L.J."/>
            <person name="Land M."/>
            <person name="Donohue T.J."/>
            <person name="Kaplan S."/>
        </authorList>
    </citation>
    <scope>NUCLEOTIDE SEQUENCE [LARGE SCALE GENOMIC DNA]</scope>
    <source>
        <strain>ATCC 17023 / DSM 158 / JCM 6121 / CCUG 31486 / LMG 2827 / NBRC 12203 / NCIMB 8253 / ATH 2.4.1.</strain>
    </source>
</reference>